<evidence type="ECO:0000250" key="1"/>
<evidence type="ECO:0000250" key="2">
    <source>
        <dbReference type="UniProtKB" id="P14769"/>
    </source>
</evidence>
<evidence type="ECO:0000255" key="3"/>
<evidence type="ECO:0000305" key="4"/>
<gene>
    <name type="primary">GGTA1</name>
</gene>
<proteinExistence type="evidence at transcript level"/>
<reference key="1">
    <citation type="submission" date="2002-10" db="EMBL/GenBank/DDBJ databases">
        <title>Isolation and phylogenetic analysis of alpha 1,3-galactosyltransferase and expression in transduced human cells.</title>
        <authorList>
            <person name="Roy B.B."/>
            <person name="Oue A."/>
            <person name="Shinagawa M."/>
            <person name="Tanaka A."/>
            <person name="Tamura K."/>
            <person name="Shimizu N."/>
            <person name="Hoshino H."/>
        </authorList>
    </citation>
    <scope>NUCLEOTIDE SEQUENCE [MRNA]</scope>
</reference>
<keyword id="KW-0325">Glycoprotein</keyword>
<keyword id="KW-0328">Glycosyltransferase</keyword>
<keyword id="KW-0333">Golgi apparatus</keyword>
<keyword id="KW-0464">Manganese</keyword>
<keyword id="KW-0472">Membrane</keyword>
<keyword id="KW-0479">Metal-binding</keyword>
<keyword id="KW-1185">Reference proteome</keyword>
<keyword id="KW-0735">Signal-anchor</keyword>
<keyword id="KW-0808">Transferase</keyword>
<keyword id="KW-0812">Transmembrane</keyword>
<keyword id="KW-1133">Transmembrane helix</keyword>
<sequence length="370" mass="43569">MNVKGRVVLSMLVVSTVIVVFWEYINSPEGSFLWIYHSKNPEVGDSSTQKGWWFPSWFNNRTHSYPEEEAVDEGDEQRKENSEELQLSDWFNPQKRPDVVTVTEWKAPVVWEGTYNKAILENYYARQKITVGLTVFAVGRYIEHYLEEFLISANRYFMVGHKVIFYIMVDDVSKMPLIELGPLRSFKVFEIKPEKRWQDISMMRMKIIGEHIVAHIQHEVDFLFCMDVDQVFQDSFGVETLGQSVAQLQAWWYKADPDEFTYERRKESAAYIPFGEGDFYYHAAIFGGTPTQVLNITQECFKGILQDKKNDIEAEWHDESHLNKYFLLNKPTKILSPEYCWDYHIGLPSDIKIVKISWQTKEYNLVRNNI</sequence>
<accession>Q8HY56</accession>
<protein>
    <recommendedName>
        <fullName>N-acetyllactosaminide alpha-1,3-galactosyltransferase</fullName>
        <ecNumber evidence="2">2.4.1.87</ecNumber>
    </recommendedName>
    <alternativeName>
        <fullName>UDP-galactose:beta-D-galactosyl-1,4-N-acetyl-D-glucosaminide alpha-1,3-galactosyltransferase</fullName>
        <shortName>Galactosyltransferase</shortName>
    </alternativeName>
</protein>
<dbReference type="EC" id="2.4.1.87" evidence="2"/>
<dbReference type="EMBL" id="AY167024">
    <property type="protein sequence ID" value="AAN86555.1"/>
    <property type="molecule type" value="mRNA"/>
</dbReference>
<dbReference type="RefSeq" id="NP_001009308.1">
    <property type="nucleotide sequence ID" value="NM_001009308.1"/>
</dbReference>
<dbReference type="SMR" id="Q8HY56"/>
<dbReference type="STRING" id="9685.ENSFCAP00000046461"/>
<dbReference type="CAZy" id="GT6">
    <property type="family name" value="Glycosyltransferase Family 6"/>
</dbReference>
<dbReference type="GlyCosmos" id="Q8HY56">
    <property type="glycosylation" value="2 sites, No reported glycans"/>
</dbReference>
<dbReference type="PaxDb" id="9685-ENSFCAP00000022161"/>
<dbReference type="GeneID" id="493877"/>
<dbReference type="KEGG" id="fca:493877"/>
<dbReference type="CTD" id="2681"/>
<dbReference type="eggNOG" id="ENOG502QW2H">
    <property type="taxonomic scope" value="Eukaryota"/>
</dbReference>
<dbReference type="InParanoid" id="Q8HY56"/>
<dbReference type="OrthoDB" id="10013941at2759"/>
<dbReference type="UniPathway" id="UPA00378"/>
<dbReference type="Proteomes" id="UP000011712">
    <property type="component" value="Unplaced"/>
</dbReference>
<dbReference type="GO" id="GO:0005794">
    <property type="term" value="C:Golgi apparatus"/>
    <property type="evidence" value="ECO:0000318"/>
    <property type="project" value="GO_Central"/>
</dbReference>
<dbReference type="GO" id="GO:0031985">
    <property type="term" value="C:Golgi cisterna"/>
    <property type="evidence" value="ECO:0000250"/>
    <property type="project" value="UniProtKB"/>
</dbReference>
<dbReference type="GO" id="GO:0032580">
    <property type="term" value="C:Golgi cisterna membrane"/>
    <property type="evidence" value="ECO:0007669"/>
    <property type="project" value="UniProtKB-SubCell"/>
</dbReference>
<dbReference type="GO" id="GO:0031982">
    <property type="term" value="C:vesicle"/>
    <property type="evidence" value="ECO:0000318"/>
    <property type="project" value="GO_Central"/>
</dbReference>
<dbReference type="GO" id="GO:0016757">
    <property type="term" value="F:glycosyltransferase activity"/>
    <property type="evidence" value="ECO:0000318"/>
    <property type="project" value="GO_Central"/>
</dbReference>
<dbReference type="GO" id="GO:0046872">
    <property type="term" value="F:metal ion binding"/>
    <property type="evidence" value="ECO:0007669"/>
    <property type="project" value="UniProtKB-KW"/>
</dbReference>
<dbReference type="GO" id="GO:0047276">
    <property type="term" value="F:N-acetyllactosaminide 3-alpha-galactosyltransferase activity"/>
    <property type="evidence" value="ECO:0007669"/>
    <property type="project" value="UniProtKB-EC"/>
</dbReference>
<dbReference type="GO" id="GO:0005975">
    <property type="term" value="P:carbohydrate metabolic process"/>
    <property type="evidence" value="ECO:0007669"/>
    <property type="project" value="InterPro"/>
</dbReference>
<dbReference type="GO" id="GO:0030259">
    <property type="term" value="P:lipid glycosylation"/>
    <property type="evidence" value="ECO:0000318"/>
    <property type="project" value="GO_Central"/>
</dbReference>
<dbReference type="GO" id="GO:0006486">
    <property type="term" value="P:protein glycosylation"/>
    <property type="evidence" value="ECO:0007669"/>
    <property type="project" value="UniProtKB-UniPathway"/>
</dbReference>
<dbReference type="CDD" id="cd02515">
    <property type="entry name" value="Glyco_transf_6"/>
    <property type="match status" value="1"/>
</dbReference>
<dbReference type="FunFam" id="3.90.550.10:FF:000022">
    <property type="entry name" value="Histo-blood group ABO system transferase"/>
    <property type="match status" value="1"/>
</dbReference>
<dbReference type="Gene3D" id="3.90.550.10">
    <property type="entry name" value="Spore Coat Polysaccharide Biosynthesis Protein SpsA, Chain A"/>
    <property type="match status" value="1"/>
</dbReference>
<dbReference type="InterPro" id="IPR005076">
    <property type="entry name" value="Glyco_trans_6"/>
</dbReference>
<dbReference type="InterPro" id="IPR029044">
    <property type="entry name" value="Nucleotide-diphossugar_trans"/>
</dbReference>
<dbReference type="PANTHER" id="PTHR10462">
    <property type="entry name" value="GLYCOSYLTRANSFERASE-RELATED"/>
    <property type="match status" value="1"/>
</dbReference>
<dbReference type="PANTHER" id="PTHR10462:SF26">
    <property type="entry name" value="N-ACETYLLACTOSAMINIDE ALPHA-1,3-GALACTOSYLTRANSFERASE"/>
    <property type="match status" value="1"/>
</dbReference>
<dbReference type="Pfam" id="PF03414">
    <property type="entry name" value="Glyco_transf_6"/>
    <property type="match status" value="1"/>
</dbReference>
<dbReference type="SUPFAM" id="SSF53448">
    <property type="entry name" value="Nucleotide-diphospho-sugar transferases"/>
    <property type="match status" value="1"/>
</dbReference>
<organism>
    <name type="scientific">Felis catus</name>
    <name type="common">Cat</name>
    <name type="synonym">Felis silvestris catus</name>
    <dbReference type="NCBI Taxonomy" id="9685"/>
    <lineage>
        <taxon>Eukaryota</taxon>
        <taxon>Metazoa</taxon>
        <taxon>Chordata</taxon>
        <taxon>Craniata</taxon>
        <taxon>Vertebrata</taxon>
        <taxon>Euteleostomi</taxon>
        <taxon>Mammalia</taxon>
        <taxon>Eutheria</taxon>
        <taxon>Laurasiatheria</taxon>
        <taxon>Carnivora</taxon>
        <taxon>Feliformia</taxon>
        <taxon>Felidae</taxon>
        <taxon>Felinae</taxon>
        <taxon>Felis</taxon>
    </lineage>
</organism>
<comment type="function">
    <text evidence="1">Synthesizes the galactose-alpha(1,3)-galactose group by catalyzing the transfer of a galactose residue, with an alpha-1,3 linkage, on terminal lactosaminide (Gal-beta-1,4-GlcNAc-R) disaccharide borne by a glycoprotein or a glycolipid. Preferentially glycosylates proteins, can synthesize galactose-alpha(1,3)-galactose on glycoproteins but cannot synthesize the glycolipid called isogloboside 3 (iGb3) (By similarity).</text>
</comment>
<comment type="catalytic activity">
    <reaction evidence="2">
        <text>a beta-D-galactosyl-(1-&gt;4)-N-acetyl-beta-D-glucosaminyl derivative + UDP-alpha-D-galactose = an alpha-D-galactosyl-(1-&gt;3)-beta-D-galactosyl-(1-&gt;4)-N-acetyl-beta-D-glucosaminyl derivative + UDP + H(+)</text>
        <dbReference type="Rhea" id="RHEA:13013"/>
        <dbReference type="ChEBI" id="CHEBI:15378"/>
        <dbReference type="ChEBI" id="CHEBI:58223"/>
        <dbReference type="ChEBI" id="CHEBI:66914"/>
        <dbReference type="ChEBI" id="CHEBI:133507"/>
        <dbReference type="ChEBI" id="CHEBI:138024"/>
        <dbReference type="EC" id="2.4.1.87"/>
    </reaction>
</comment>
<comment type="cofactor">
    <cofactor evidence="2">
        <name>Mn(2+)</name>
        <dbReference type="ChEBI" id="CHEBI:29035"/>
    </cofactor>
    <text evidence="2">Binds 1 Mn(2+) ion per subunit.</text>
</comment>
<comment type="pathway">
    <text evidence="2">Protein modification; protein glycosylation.</text>
</comment>
<comment type="subcellular location">
    <subcellularLocation>
        <location evidence="1">Golgi apparatus</location>
        <location evidence="1">Golgi stack membrane</location>
        <topology evidence="1">Single-pass type II membrane protein</topology>
    </subcellularLocation>
    <text evidence="1">Membrane-bound form in trans cisternae of Golgi.</text>
</comment>
<comment type="domain">
    <text evidence="1">The conserved DXD motif is involved in cofactor binding. The manganese ion interacts with the beta-phosphate group of UDP and may also have a role in catalysis (By similarity).</text>
</comment>
<comment type="similarity">
    <text evidence="4">Belongs to the glycosyltransferase 6 family.</text>
</comment>
<feature type="chain" id="PRO_0000333700" description="N-acetyllactosaminide alpha-1,3-galactosyltransferase">
    <location>
        <begin position="1"/>
        <end position="370"/>
    </location>
</feature>
<feature type="topological domain" description="Cytoplasmic" evidence="3">
    <location>
        <begin position="1"/>
        <end position="6"/>
    </location>
</feature>
<feature type="transmembrane region" description="Helical; Signal-anchor for type II membrane protein" evidence="3">
    <location>
        <begin position="7"/>
        <end position="25"/>
    </location>
</feature>
<feature type="topological domain" description="Lumenal" evidence="3">
    <location>
        <begin position="26"/>
        <end position="370"/>
    </location>
</feature>
<feature type="active site" description="Nucleophile" evidence="2">
    <location>
        <position position="319"/>
    </location>
</feature>
<feature type="binding site" evidence="2">
    <location>
        <begin position="136"/>
        <end position="141"/>
    </location>
    <ligand>
        <name>substrate</name>
    </ligand>
</feature>
<feature type="binding site" evidence="2">
    <location>
        <begin position="227"/>
        <end position="229"/>
    </location>
    <ligand>
        <name>substrate</name>
    </ligand>
</feature>
<feature type="binding site" evidence="2">
    <location>
        <position position="227"/>
    </location>
    <ligand>
        <name>Mn(2+)</name>
        <dbReference type="ChEBI" id="CHEBI:29035"/>
    </ligand>
</feature>
<feature type="binding site" evidence="2">
    <location>
        <position position="229"/>
    </location>
    <ligand>
        <name>Mn(2+)</name>
        <dbReference type="ChEBI" id="CHEBI:29035"/>
    </ligand>
</feature>
<feature type="binding site" evidence="2">
    <location>
        <begin position="249"/>
        <end position="252"/>
    </location>
    <ligand>
        <name>substrate</name>
    </ligand>
</feature>
<feature type="binding site" evidence="2">
    <location>
        <position position="261"/>
    </location>
    <ligand>
        <name>substrate</name>
    </ligand>
</feature>
<feature type="binding site" evidence="2">
    <location>
        <begin position="361"/>
        <end position="367"/>
    </location>
    <ligand>
        <name>substrate</name>
    </ligand>
</feature>
<feature type="glycosylation site" description="N-linked (GlcNAc...) asparagine" evidence="3">
    <location>
        <position position="60"/>
    </location>
</feature>
<feature type="glycosylation site" description="N-linked (GlcNAc...) asparagine" evidence="3">
    <location>
        <position position="295"/>
    </location>
</feature>
<name>GGTA1_FELCA</name>